<organism>
    <name type="scientific">Haemophilus influenzae (strain ATCC 51907 / DSM 11121 / KW20 / Rd)</name>
    <dbReference type="NCBI Taxonomy" id="71421"/>
    <lineage>
        <taxon>Bacteria</taxon>
        <taxon>Pseudomonadati</taxon>
        <taxon>Pseudomonadota</taxon>
        <taxon>Gammaproteobacteria</taxon>
        <taxon>Pasteurellales</taxon>
        <taxon>Pasteurellaceae</taxon>
        <taxon>Haemophilus</taxon>
    </lineage>
</organism>
<protein>
    <recommendedName>
        <fullName evidence="1">Protein translocase subunit SecE</fullName>
    </recommendedName>
</protein>
<reference key="1">
    <citation type="journal article" date="1995" name="Science">
        <title>Whole-genome random sequencing and assembly of Haemophilus influenzae Rd.</title>
        <authorList>
            <person name="Fleischmann R.D."/>
            <person name="Adams M.D."/>
            <person name="White O."/>
            <person name="Clayton R.A."/>
            <person name="Kirkness E.F."/>
            <person name="Kerlavage A.R."/>
            <person name="Bult C.J."/>
            <person name="Tomb J.-F."/>
            <person name="Dougherty B.A."/>
            <person name="Merrick J.M."/>
            <person name="McKenney K."/>
            <person name="Sutton G.G."/>
            <person name="FitzHugh W."/>
            <person name="Fields C.A."/>
            <person name="Gocayne J.D."/>
            <person name="Scott J.D."/>
            <person name="Shirley R."/>
            <person name="Liu L.-I."/>
            <person name="Glodek A."/>
            <person name="Kelley J.M."/>
            <person name="Weidman J.F."/>
            <person name="Phillips C.A."/>
            <person name="Spriggs T."/>
            <person name="Hedblom E."/>
            <person name="Cotton M.D."/>
            <person name="Utterback T.R."/>
            <person name="Hanna M.C."/>
            <person name="Nguyen D.T."/>
            <person name="Saudek D.M."/>
            <person name="Brandon R.C."/>
            <person name="Fine L.D."/>
            <person name="Fritchman J.L."/>
            <person name="Fuhrmann J.L."/>
            <person name="Geoghagen N.S.M."/>
            <person name="Gnehm C.L."/>
            <person name="McDonald L.A."/>
            <person name="Small K.V."/>
            <person name="Fraser C.M."/>
            <person name="Smith H.O."/>
            <person name="Venter J.C."/>
        </authorList>
    </citation>
    <scope>NUCLEOTIDE SEQUENCE [LARGE SCALE GENOMIC DNA]</scope>
    <source>
        <strain>ATCC 51907 / DSM 11121 / KW20 / Rd</strain>
    </source>
</reference>
<name>SECE_HAEIN</name>
<sequence length="106" mass="11817">MIFFAAAAIGNIYFQQIYSLPIRVIGMAIALVIAFILAAITNQGTKARAFFNDSRTEARKVVWPTRAEARQTTLIVIGVTMIASLFFWAVDSIIVTVINFLTDLRF</sequence>
<gene>
    <name evidence="1" type="primary">secE</name>
    <name type="ordered locus">HI_0716</name>
</gene>
<feature type="chain" id="PRO_0000104166" description="Protein translocase subunit SecE">
    <location>
        <begin position="1"/>
        <end position="106"/>
    </location>
</feature>
<feature type="transmembrane region" description="Helical" evidence="1">
    <location>
        <begin position="20"/>
        <end position="40"/>
    </location>
</feature>
<feature type="transmembrane region" description="Helical" evidence="1">
    <location>
        <begin position="75"/>
        <end position="95"/>
    </location>
</feature>
<comment type="function">
    <text evidence="1">Essential subunit of the Sec protein translocation channel SecYEG. Clamps together the 2 halves of SecY. May contact the channel plug during translocation.</text>
</comment>
<comment type="subunit">
    <text evidence="1">Component of the Sec protein translocase complex. Heterotrimer consisting of SecY, SecE and SecG subunits. The heterotrimers can form oligomers, although 1 heterotrimer is thought to be able to translocate proteins. Interacts with the ribosome. Interacts with SecDF, and other proteins may be involved. Interacts with SecA.</text>
</comment>
<comment type="subcellular location">
    <subcellularLocation>
        <location evidence="1">Cell inner membrane</location>
        <topology evidence="1">Multi-pass membrane protein</topology>
    </subcellularLocation>
</comment>
<comment type="similarity">
    <text evidence="1">Belongs to the SecE/SEC61-gamma family.</text>
</comment>
<accession>P43805</accession>
<keyword id="KW-0997">Cell inner membrane</keyword>
<keyword id="KW-1003">Cell membrane</keyword>
<keyword id="KW-0472">Membrane</keyword>
<keyword id="KW-0653">Protein transport</keyword>
<keyword id="KW-1185">Reference proteome</keyword>
<keyword id="KW-0811">Translocation</keyword>
<keyword id="KW-0812">Transmembrane</keyword>
<keyword id="KW-1133">Transmembrane helix</keyword>
<keyword id="KW-0813">Transport</keyword>
<evidence type="ECO:0000255" key="1">
    <source>
        <dbReference type="HAMAP-Rule" id="MF_00422"/>
    </source>
</evidence>
<dbReference type="EMBL" id="L42023">
    <property type="protein sequence ID" value="AAC22373.1"/>
    <property type="molecule type" value="Genomic_DNA"/>
</dbReference>
<dbReference type="PIR" id="F64088">
    <property type="entry name" value="F64088"/>
</dbReference>
<dbReference type="RefSeq" id="NP_438874.1">
    <property type="nucleotide sequence ID" value="NC_000907.1"/>
</dbReference>
<dbReference type="STRING" id="71421.HI_0716"/>
<dbReference type="EnsemblBacteria" id="AAC22373">
    <property type="protein sequence ID" value="AAC22373"/>
    <property type="gene ID" value="HI_0716"/>
</dbReference>
<dbReference type="KEGG" id="hin:HI_0716"/>
<dbReference type="PATRIC" id="fig|71421.8.peg.748"/>
<dbReference type="eggNOG" id="COG0690">
    <property type="taxonomic scope" value="Bacteria"/>
</dbReference>
<dbReference type="HOGENOM" id="CLU_113663_0_2_6"/>
<dbReference type="OrthoDB" id="9806365at2"/>
<dbReference type="PhylomeDB" id="P43805"/>
<dbReference type="BioCyc" id="HINF71421:G1GJ1-750-MONOMER"/>
<dbReference type="Proteomes" id="UP000000579">
    <property type="component" value="Chromosome"/>
</dbReference>
<dbReference type="GO" id="GO:0005886">
    <property type="term" value="C:plasma membrane"/>
    <property type="evidence" value="ECO:0000318"/>
    <property type="project" value="GO_Central"/>
</dbReference>
<dbReference type="GO" id="GO:0008320">
    <property type="term" value="F:protein transmembrane transporter activity"/>
    <property type="evidence" value="ECO:0000318"/>
    <property type="project" value="GO_Central"/>
</dbReference>
<dbReference type="GO" id="GO:0065002">
    <property type="term" value="P:intracellular protein transmembrane transport"/>
    <property type="evidence" value="ECO:0007669"/>
    <property type="project" value="UniProtKB-UniRule"/>
</dbReference>
<dbReference type="GO" id="GO:0009306">
    <property type="term" value="P:protein secretion"/>
    <property type="evidence" value="ECO:0007669"/>
    <property type="project" value="UniProtKB-UniRule"/>
</dbReference>
<dbReference type="GO" id="GO:0006605">
    <property type="term" value="P:protein targeting"/>
    <property type="evidence" value="ECO:0007669"/>
    <property type="project" value="UniProtKB-UniRule"/>
</dbReference>
<dbReference type="GO" id="GO:0043952">
    <property type="term" value="P:protein transport by the Sec complex"/>
    <property type="evidence" value="ECO:0000318"/>
    <property type="project" value="GO_Central"/>
</dbReference>
<dbReference type="Gene3D" id="1.20.5.1030">
    <property type="entry name" value="Preprotein translocase secy subunit"/>
    <property type="match status" value="1"/>
</dbReference>
<dbReference type="HAMAP" id="MF_00422">
    <property type="entry name" value="SecE"/>
    <property type="match status" value="1"/>
</dbReference>
<dbReference type="InterPro" id="IPR005807">
    <property type="entry name" value="SecE_bac"/>
</dbReference>
<dbReference type="InterPro" id="IPR038379">
    <property type="entry name" value="SecE_sf"/>
</dbReference>
<dbReference type="InterPro" id="IPR001901">
    <property type="entry name" value="Translocase_SecE/Sec61-g"/>
</dbReference>
<dbReference type="NCBIfam" id="NF004376">
    <property type="entry name" value="PRK05740.2-1"/>
    <property type="match status" value="1"/>
</dbReference>
<dbReference type="NCBIfam" id="TIGR00964">
    <property type="entry name" value="secE_bact"/>
    <property type="match status" value="1"/>
</dbReference>
<dbReference type="PANTHER" id="PTHR33910">
    <property type="entry name" value="PROTEIN TRANSLOCASE SUBUNIT SECE"/>
    <property type="match status" value="1"/>
</dbReference>
<dbReference type="PANTHER" id="PTHR33910:SF1">
    <property type="entry name" value="PROTEIN TRANSLOCASE SUBUNIT SECE"/>
    <property type="match status" value="1"/>
</dbReference>
<dbReference type="Pfam" id="PF00584">
    <property type="entry name" value="SecE"/>
    <property type="match status" value="1"/>
</dbReference>
<dbReference type="PRINTS" id="PR01650">
    <property type="entry name" value="SECETRNLCASE"/>
</dbReference>
<dbReference type="PROSITE" id="PS01067">
    <property type="entry name" value="SECE_SEC61G"/>
    <property type="match status" value="1"/>
</dbReference>
<proteinExistence type="inferred from homology"/>